<sequence>MPRTRNIGALCTLPEDTTHSGRPRRGVQRSYISRMAEPAPANMNDPLLLPLRMNTPGLSLVQILLGYMSWLTYLACFLRTQTQQVFLNTCRCKLFCQKVMEKMGLLVLCVFGFWMFSMHLPSKVEVWQDDSINGPLQSLRMYQEKVRHHTGEIQDLRGSMNQLIAKLQKMEAISDEQKMAQKIMKMIQGDYIEKPDFALKSIGASIDFEHTSATYNHDKARSYWNWIRLWNYAQPPDVILEPNVTPGNCWAFASDRGQVTIRLAQKVYLSNITLQHIPKTISLSGSPDTAPKDIVIYGLESLPREEVFLGAFQFQPENVIQMFQLQNLPPRSFAAVKVKISSNWGNPRFTCMYRVRVHGSVTPPKDSHLEPLS</sequence>
<comment type="function">
    <text evidence="7 12">Plays an essential role in anchoring sperm head to the tail. Is responsible for the attachment of the coupling apparatus to the sperm nuclear envelope.</text>
</comment>
<comment type="subunit">
    <text evidence="8 13">Probable homotrimer (Probable). Interacts with DNAJB13 (PubMed:29298896).</text>
</comment>
<comment type="subcellular location">
    <subcellularLocation>
        <location evidence="4 6 7 8">Nucleus inner membrane</location>
        <topology evidence="4">Single-pass membrane protein</topology>
    </subcellularLocation>
    <subcellularLocation>
        <location evidence="6">Golgi apparatus</location>
    </subcellularLocation>
    <text evidence="4 6 7">During spermiogenesis, traffics through the Golgi apparatus before reaching the round spermatid inner membrane of the nuclear envelope and later migrates to the coupling apparatus of the sperm during sperm head elongation and differentiation. In mature spermatozoa, is localized to the coupling apparatus of the sperm head and tail in the implementation fossa.</text>
</comment>
<comment type="alternative products">
    <event type="alternative splicing"/>
    <isoform>
        <id>Q9DA32-1</id>
        <name>1</name>
        <name>SPAG4L-2</name>
        <sequence type="displayed"/>
    </isoform>
    <isoform>
        <id>Q9DA32-2</id>
        <name>2</name>
        <sequence type="described" ref="VSP_046528"/>
    </isoform>
</comment>
<comment type="tissue specificity">
    <text evidence="3 5">Testis-specific, abundantly expressed in spermatocytes and round spermatids.</text>
</comment>
<comment type="developmental stage">
    <text evidence="5 8">Observed in spermatocyte meiosis I and II stages (PubMed:21711156). Expressed during spermiogenesis (PubMed:29298896).</text>
</comment>
<comment type="PTM">
    <text evidence="6">Highly glycosylated in the Golgi apparatus during spermiogenesis.</text>
</comment>
<comment type="disruption phenotype">
    <text evidence="7">Mutant males are infertile. Spermatozoa are acephalic, the sperm head to tail coupling apparatus is detached from nucleus during spermatid elongation.</text>
</comment>
<accession>Q9DA32</accession>
<accession>D2DR64</accession>
<accession>Q5DT38</accession>
<evidence type="ECO:0000255" key="1"/>
<evidence type="ECO:0000255" key="2">
    <source>
        <dbReference type="PROSITE-ProRule" id="PRU00802"/>
    </source>
</evidence>
<evidence type="ECO:0000269" key="3">
    <source>
    </source>
</evidence>
<evidence type="ECO:0000269" key="4">
    <source>
    </source>
</evidence>
<evidence type="ECO:0000269" key="5">
    <source>
    </source>
</evidence>
<evidence type="ECO:0000269" key="6">
    <source>
    </source>
</evidence>
<evidence type="ECO:0000269" key="7">
    <source>
    </source>
</evidence>
<evidence type="ECO:0000269" key="8">
    <source>
    </source>
</evidence>
<evidence type="ECO:0000303" key="9">
    <source>
    </source>
</evidence>
<evidence type="ECO:0000303" key="10">
    <source>
    </source>
</evidence>
<evidence type="ECO:0000305" key="11"/>
<evidence type="ECO:0000305" key="12">
    <source>
    </source>
</evidence>
<evidence type="ECO:0000305" key="13">
    <source>
    </source>
</evidence>
<feature type="chain" id="PRO_0000218920" description="SUN domain-containing protein 5">
    <location>
        <begin position="1"/>
        <end position="373"/>
    </location>
</feature>
<feature type="topological domain" description="Nuclear" evidence="1">
    <location>
        <begin position="1"/>
        <end position="103"/>
    </location>
</feature>
<feature type="transmembrane region" description="Helical" evidence="1">
    <location>
        <begin position="104"/>
        <end position="120"/>
    </location>
</feature>
<feature type="topological domain" description="Perinuclear space" evidence="1">
    <location>
        <begin position="121"/>
        <end position="373"/>
    </location>
</feature>
<feature type="domain" description="SUN" evidence="2">
    <location>
        <begin position="204"/>
        <end position="362"/>
    </location>
</feature>
<feature type="coiled-coil region" evidence="1">
    <location>
        <begin position="136"/>
        <end position="180"/>
    </location>
</feature>
<feature type="splice variant" id="VSP_046528" description="In isoform 2." evidence="9 10">
    <location>
        <begin position="44"/>
        <end position="69"/>
    </location>
</feature>
<feature type="mutagenesis site" description="Corresponds to R-114 variant associated with SPGF16 in human. Impairs nuclear inner membrane location, expressed in the cytosol with some protein aggregation near the nuclear envelope." evidence="8">
    <original>G</original>
    <variation>R</variation>
    <location>
        <position position="112"/>
    </location>
</feature>
<feature type="mutagenesis site" description="Corresponds to variant K-162 associated with SPGF16 in human. Increases interaction with DNAJB13. Impairs nuclear inner membrane location, expressed in the cytosol with some protein aggregation near the nuclear envelope." evidence="8">
    <original>M</original>
    <variation>K</variation>
    <location>
        <position position="160"/>
    </location>
</feature>
<feature type="mutagenesis site" description="Corresponds to M-261 variant associated with SPGF16 in human. Decreases protein solubility, impairs nuclear inner membrane location and decreases interaction with DNAJB13." evidence="8">
    <original>V</original>
    <variation>M</variation>
    <location>
        <position position="259"/>
    </location>
</feature>
<feature type="mutagenesis site" description="Corresponds to M-275 variant associated with SPGF16 in human. Impairs nuclear inner membrane location and decreases interaction with DNAJB13." evidence="8">
    <original>T</original>
    <variation>M</variation>
    <location>
        <position position="273"/>
    </location>
</feature>
<feature type="mutagenesis site" description="Corresponds to I-348 variant associated with SPGF16 in human. Impairs nuclear inner membrane location and increases interaction with DNAJB13." evidence="8">
    <original>N</original>
    <variation>I</variation>
    <location>
        <position position="346"/>
    </location>
</feature>
<feature type="mutagenesis site" description="Corresponds to C-356 variant associated with SPGF16 in human. Impairs nuclear inner membrane location and decreases interaction with DNAJB13." evidence="8">
    <original>R</original>
    <variation>C</variation>
    <location>
        <position position="354"/>
    </location>
</feature>
<feature type="sequence conflict" description="In Ref. 1; AAP69223 and 3; BAB24468." evidence="11" ref="1 3">
    <original>P</original>
    <variation>L</variation>
    <location>
        <position position="287"/>
    </location>
</feature>
<feature type="sequence conflict" description="In Ref. 1; AAP69223 and 3; BAB24468." evidence="11" ref="1 3">
    <original>I</original>
    <variation>F</variation>
    <location>
        <position position="294"/>
    </location>
</feature>
<feature type="sequence conflict" description="In Ref. 1; AAP69223 and 3; BAB24468." evidence="11" ref="1 3">
    <original>VIQM</original>
    <variation>IIQT</variation>
    <location>
        <begin position="319"/>
        <end position="322"/>
    </location>
</feature>
<proteinExistence type="evidence at protein level"/>
<protein>
    <recommendedName>
        <fullName>SUN domain-containing protein 5</fullName>
    </recommendedName>
    <alternativeName>
        <fullName>Sperm-associated antigen 4-like protein</fullName>
    </alternativeName>
</protein>
<organism>
    <name type="scientific">Mus musculus</name>
    <name type="common">Mouse</name>
    <dbReference type="NCBI Taxonomy" id="10090"/>
    <lineage>
        <taxon>Eukaryota</taxon>
        <taxon>Metazoa</taxon>
        <taxon>Chordata</taxon>
        <taxon>Craniata</taxon>
        <taxon>Vertebrata</taxon>
        <taxon>Euteleostomi</taxon>
        <taxon>Mammalia</taxon>
        <taxon>Eutheria</taxon>
        <taxon>Euarchontoglires</taxon>
        <taxon>Glires</taxon>
        <taxon>Rodentia</taxon>
        <taxon>Myomorpha</taxon>
        <taxon>Muroidea</taxon>
        <taxon>Muridae</taxon>
        <taxon>Murinae</taxon>
        <taxon>Mus</taxon>
        <taxon>Mus</taxon>
    </lineage>
</organism>
<keyword id="KW-0025">Alternative splicing</keyword>
<keyword id="KW-0175">Coiled coil</keyword>
<keyword id="KW-0221">Differentiation</keyword>
<keyword id="KW-0325">Glycoprotein</keyword>
<keyword id="KW-0333">Golgi apparatus</keyword>
<keyword id="KW-0472">Membrane</keyword>
<keyword id="KW-0539">Nucleus</keyword>
<keyword id="KW-1185">Reference proteome</keyword>
<keyword id="KW-0744">Spermatogenesis</keyword>
<keyword id="KW-0812">Transmembrane</keyword>
<keyword id="KW-1133">Transmembrane helix</keyword>
<name>SUN5_MOUSE</name>
<dbReference type="EMBL" id="AY307077">
    <property type="protein sequence ID" value="AAP69223.1"/>
    <property type="molecule type" value="mRNA"/>
</dbReference>
<dbReference type="EMBL" id="FJ667498">
    <property type="protein sequence ID" value="ACV74249.1"/>
    <property type="molecule type" value="mRNA"/>
</dbReference>
<dbReference type="EMBL" id="AK006225">
    <property type="protein sequence ID" value="BAB24468.1"/>
    <property type="molecule type" value="mRNA"/>
</dbReference>
<dbReference type="RefSeq" id="NP_001291977.1">
    <property type="nucleotide sequence ID" value="NM_001305048.1"/>
</dbReference>
<dbReference type="RefSeq" id="NP_083875.1">
    <property type="nucleotide sequence ID" value="NM_029599.2"/>
</dbReference>
<dbReference type="SMR" id="Q9DA32"/>
<dbReference type="FunCoup" id="Q9DA32">
    <property type="interactions" value="7"/>
</dbReference>
<dbReference type="STRING" id="10090.ENSMUSP00000028982"/>
<dbReference type="PhosphoSitePlus" id="Q9DA32"/>
<dbReference type="SwissPalm" id="Q9DA32"/>
<dbReference type="PaxDb" id="10090-ENSMUSP00000028982"/>
<dbReference type="ProteomicsDB" id="257376">
    <molecule id="Q9DA32-1"/>
</dbReference>
<dbReference type="ProteomicsDB" id="257377">
    <molecule id="Q9DA32-2"/>
</dbReference>
<dbReference type="DNASU" id="76407"/>
<dbReference type="GeneID" id="76407"/>
<dbReference type="KEGG" id="mmu:76407"/>
<dbReference type="UCSC" id="uc008nim.2">
    <molecule id="Q9DA32-2"/>
    <property type="organism name" value="mouse"/>
</dbReference>
<dbReference type="UCSC" id="uc012cgr.2">
    <molecule id="Q9DA32-1"/>
    <property type="organism name" value="mouse"/>
</dbReference>
<dbReference type="AGR" id="MGI:1923657"/>
<dbReference type="CTD" id="140732"/>
<dbReference type="MGI" id="MGI:1923657">
    <property type="gene designation" value="Sun5"/>
</dbReference>
<dbReference type="eggNOG" id="KOG2687">
    <property type="taxonomic scope" value="Eukaryota"/>
</dbReference>
<dbReference type="InParanoid" id="Q9DA32"/>
<dbReference type="OrthoDB" id="342281at2759"/>
<dbReference type="TreeFam" id="TF323915"/>
<dbReference type="BioGRID-ORCS" id="76407">
    <property type="hits" value="2 hits in 60 CRISPR screens"/>
</dbReference>
<dbReference type="PRO" id="PR:Q9DA32"/>
<dbReference type="Proteomes" id="UP000000589">
    <property type="component" value="Unplaced"/>
</dbReference>
<dbReference type="RNAct" id="Q9DA32">
    <property type="molecule type" value="protein"/>
</dbReference>
<dbReference type="GO" id="GO:0005794">
    <property type="term" value="C:Golgi apparatus"/>
    <property type="evidence" value="ECO:0007669"/>
    <property type="project" value="UniProtKB-SubCell"/>
</dbReference>
<dbReference type="GO" id="GO:0005637">
    <property type="term" value="C:nuclear inner membrane"/>
    <property type="evidence" value="ECO:0007669"/>
    <property type="project" value="UniProtKB-SubCell"/>
</dbReference>
<dbReference type="GO" id="GO:0120212">
    <property type="term" value="C:sperm head-tail coupling apparatus"/>
    <property type="evidence" value="ECO:0000314"/>
    <property type="project" value="UniProtKB"/>
</dbReference>
<dbReference type="GO" id="GO:0065003">
    <property type="term" value="P:protein-containing complex assembly"/>
    <property type="evidence" value="ECO:0000315"/>
    <property type="project" value="MGI"/>
</dbReference>
<dbReference type="GO" id="GO:0032880">
    <property type="term" value="P:regulation of protein localization"/>
    <property type="evidence" value="ECO:0000315"/>
    <property type="project" value="MGI"/>
</dbReference>
<dbReference type="GO" id="GO:0007286">
    <property type="term" value="P:spermatid development"/>
    <property type="evidence" value="ECO:0000315"/>
    <property type="project" value="UniProtKB"/>
</dbReference>
<dbReference type="GO" id="GO:0007283">
    <property type="term" value="P:spermatogenesis"/>
    <property type="evidence" value="ECO:0000315"/>
    <property type="project" value="MGI"/>
</dbReference>
<dbReference type="FunFam" id="2.60.120.260:FF:000032">
    <property type="entry name" value="Sperm associated antigen 4 (Predicted)"/>
    <property type="match status" value="1"/>
</dbReference>
<dbReference type="Gene3D" id="2.60.120.260">
    <property type="entry name" value="Galactose-binding domain-like"/>
    <property type="match status" value="1"/>
</dbReference>
<dbReference type="InterPro" id="IPR045119">
    <property type="entry name" value="SUN1-5"/>
</dbReference>
<dbReference type="InterPro" id="IPR012919">
    <property type="entry name" value="SUN_dom"/>
</dbReference>
<dbReference type="PANTHER" id="PTHR12911">
    <property type="entry name" value="SAD1/UNC-84-LIKE PROTEIN-RELATED"/>
    <property type="match status" value="1"/>
</dbReference>
<dbReference type="PANTHER" id="PTHR12911:SF44">
    <property type="entry name" value="SUN DOMAIN-CONTAINING PROTEIN 5"/>
    <property type="match status" value="1"/>
</dbReference>
<dbReference type="Pfam" id="PF07738">
    <property type="entry name" value="Sad1_UNC"/>
    <property type="match status" value="1"/>
</dbReference>
<dbReference type="PROSITE" id="PS51469">
    <property type="entry name" value="SUN"/>
    <property type="match status" value="1"/>
</dbReference>
<gene>
    <name type="primary">Sun5</name>
    <name type="synonym">Spag4l</name>
</gene>
<reference key="1">
    <citation type="journal article" date="2004" name="Yi Chuan Xue Bao">
        <title>Cloning of cDNA of SRG4, a mouse spermatogenesis related gene and expression in mouse different developing stages.</title>
        <authorList>
            <person name="Xing X.W."/>
            <person name="Li L.Y."/>
            <person name="Liu G."/>
            <person name="Lu G.X."/>
        </authorList>
    </citation>
    <scope>NUCLEOTIDE SEQUENCE [MRNA] (ISOFORM 2)</scope>
    <scope>TISSUE SPECIFICITY</scope>
    <source>
        <strain>C57BL/6J</strain>
        <tissue>Testis</tissue>
    </source>
</reference>
<reference key="2">
    <citation type="journal article" date="2011" name="Mol. Hum. Reprod.">
        <title>SPAG4L/SPAG4L-2 are testis-specific SUN domain proteins restricted to the apical nuclear envelope of round spermatids facing the acrosome.</title>
        <authorList>
            <person name="Frohnert C."/>
            <person name="Schweizer S."/>
            <person name="Hoyer-Fender S."/>
        </authorList>
    </citation>
    <scope>NUCLEOTIDE SEQUENCE [MRNA] (ISOFORM 1)</scope>
    <scope>SUBCELLULAR LOCATION</scope>
    <scope>ALTERNATIVE SPLICING</scope>
    <scope>TOPOLOGY</scope>
</reference>
<reference key="3">
    <citation type="journal article" date="2005" name="Science">
        <title>The transcriptional landscape of the mammalian genome.</title>
        <authorList>
            <person name="Carninci P."/>
            <person name="Kasukawa T."/>
            <person name="Katayama S."/>
            <person name="Gough J."/>
            <person name="Frith M.C."/>
            <person name="Maeda N."/>
            <person name="Oyama R."/>
            <person name="Ravasi T."/>
            <person name="Lenhard B."/>
            <person name="Wells C."/>
            <person name="Kodzius R."/>
            <person name="Shimokawa K."/>
            <person name="Bajic V.B."/>
            <person name="Brenner S.E."/>
            <person name="Batalov S."/>
            <person name="Forrest A.R."/>
            <person name="Zavolan M."/>
            <person name="Davis M.J."/>
            <person name="Wilming L.G."/>
            <person name="Aidinis V."/>
            <person name="Allen J.E."/>
            <person name="Ambesi-Impiombato A."/>
            <person name="Apweiler R."/>
            <person name="Aturaliya R.N."/>
            <person name="Bailey T.L."/>
            <person name="Bansal M."/>
            <person name="Baxter L."/>
            <person name="Beisel K.W."/>
            <person name="Bersano T."/>
            <person name="Bono H."/>
            <person name="Chalk A.M."/>
            <person name="Chiu K.P."/>
            <person name="Choudhary V."/>
            <person name="Christoffels A."/>
            <person name="Clutterbuck D.R."/>
            <person name="Crowe M.L."/>
            <person name="Dalla E."/>
            <person name="Dalrymple B.P."/>
            <person name="de Bono B."/>
            <person name="Della Gatta G."/>
            <person name="di Bernardo D."/>
            <person name="Down T."/>
            <person name="Engstrom P."/>
            <person name="Fagiolini M."/>
            <person name="Faulkner G."/>
            <person name="Fletcher C.F."/>
            <person name="Fukushima T."/>
            <person name="Furuno M."/>
            <person name="Futaki S."/>
            <person name="Gariboldi M."/>
            <person name="Georgii-Hemming P."/>
            <person name="Gingeras T.R."/>
            <person name="Gojobori T."/>
            <person name="Green R.E."/>
            <person name="Gustincich S."/>
            <person name="Harbers M."/>
            <person name="Hayashi Y."/>
            <person name="Hensch T.K."/>
            <person name="Hirokawa N."/>
            <person name="Hill D."/>
            <person name="Huminiecki L."/>
            <person name="Iacono M."/>
            <person name="Ikeo K."/>
            <person name="Iwama A."/>
            <person name="Ishikawa T."/>
            <person name="Jakt M."/>
            <person name="Kanapin A."/>
            <person name="Katoh M."/>
            <person name="Kawasawa Y."/>
            <person name="Kelso J."/>
            <person name="Kitamura H."/>
            <person name="Kitano H."/>
            <person name="Kollias G."/>
            <person name="Krishnan S.P."/>
            <person name="Kruger A."/>
            <person name="Kummerfeld S.K."/>
            <person name="Kurochkin I.V."/>
            <person name="Lareau L.F."/>
            <person name="Lazarevic D."/>
            <person name="Lipovich L."/>
            <person name="Liu J."/>
            <person name="Liuni S."/>
            <person name="McWilliam S."/>
            <person name="Madan Babu M."/>
            <person name="Madera M."/>
            <person name="Marchionni L."/>
            <person name="Matsuda H."/>
            <person name="Matsuzawa S."/>
            <person name="Miki H."/>
            <person name="Mignone F."/>
            <person name="Miyake S."/>
            <person name="Morris K."/>
            <person name="Mottagui-Tabar S."/>
            <person name="Mulder N."/>
            <person name="Nakano N."/>
            <person name="Nakauchi H."/>
            <person name="Ng P."/>
            <person name="Nilsson R."/>
            <person name="Nishiguchi S."/>
            <person name="Nishikawa S."/>
            <person name="Nori F."/>
            <person name="Ohara O."/>
            <person name="Okazaki Y."/>
            <person name="Orlando V."/>
            <person name="Pang K.C."/>
            <person name="Pavan W.J."/>
            <person name="Pavesi G."/>
            <person name="Pesole G."/>
            <person name="Petrovsky N."/>
            <person name="Piazza S."/>
            <person name="Reed J."/>
            <person name="Reid J.F."/>
            <person name="Ring B.Z."/>
            <person name="Ringwald M."/>
            <person name="Rost B."/>
            <person name="Ruan Y."/>
            <person name="Salzberg S.L."/>
            <person name="Sandelin A."/>
            <person name="Schneider C."/>
            <person name="Schoenbach C."/>
            <person name="Sekiguchi K."/>
            <person name="Semple C.A."/>
            <person name="Seno S."/>
            <person name="Sessa L."/>
            <person name="Sheng Y."/>
            <person name="Shibata Y."/>
            <person name="Shimada H."/>
            <person name="Shimada K."/>
            <person name="Silva D."/>
            <person name="Sinclair B."/>
            <person name="Sperling S."/>
            <person name="Stupka E."/>
            <person name="Sugiura K."/>
            <person name="Sultana R."/>
            <person name="Takenaka Y."/>
            <person name="Taki K."/>
            <person name="Tammoja K."/>
            <person name="Tan S.L."/>
            <person name="Tang S."/>
            <person name="Taylor M.S."/>
            <person name="Tegner J."/>
            <person name="Teichmann S.A."/>
            <person name="Ueda H.R."/>
            <person name="van Nimwegen E."/>
            <person name="Verardo R."/>
            <person name="Wei C.L."/>
            <person name="Yagi K."/>
            <person name="Yamanishi H."/>
            <person name="Zabarovsky E."/>
            <person name="Zhu S."/>
            <person name="Zimmer A."/>
            <person name="Hide W."/>
            <person name="Bult C."/>
            <person name="Grimmond S.M."/>
            <person name="Teasdale R.D."/>
            <person name="Liu E.T."/>
            <person name="Brusic V."/>
            <person name="Quackenbush J."/>
            <person name="Wahlestedt C."/>
            <person name="Mattick J.S."/>
            <person name="Hume D.A."/>
            <person name="Kai C."/>
            <person name="Sasaki D."/>
            <person name="Tomaru Y."/>
            <person name="Fukuda S."/>
            <person name="Kanamori-Katayama M."/>
            <person name="Suzuki M."/>
            <person name="Aoki J."/>
            <person name="Arakawa T."/>
            <person name="Iida J."/>
            <person name="Imamura K."/>
            <person name="Itoh M."/>
            <person name="Kato T."/>
            <person name="Kawaji H."/>
            <person name="Kawagashira N."/>
            <person name="Kawashima T."/>
            <person name="Kojima M."/>
            <person name="Kondo S."/>
            <person name="Konno H."/>
            <person name="Nakano K."/>
            <person name="Ninomiya N."/>
            <person name="Nishio T."/>
            <person name="Okada M."/>
            <person name="Plessy C."/>
            <person name="Shibata K."/>
            <person name="Shiraki T."/>
            <person name="Suzuki S."/>
            <person name="Tagami M."/>
            <person name="Waki K."/>
            <person name="Watahiki A."/>
            <person name="Okamura-Oho Y."/>
            <person name="Suzuki H."/>
            <person name="Kawai J."/>
            <person name="Hayashizaki Y."/>
        </authorList>
    </citation>
    <scope>NUCLEOTIDE SEQUENCE [LARGE SCALE MRNA] (ISOFORM 2)</scope>
    <source>
        <strain>C57BL/6J</strain>
        <tissue>Testis</tissue>
    </source>
</reference>
<reference key="4">
    <citation type="journal article" date="2010" name="Cell">
        <title>A tissue-specific atlas of mouse protein phosphorylation and expression.</title>
        <authorList>
            <person name="Huttlin E.L."/>
            <person name="Jedrychowski M.P."/>
            <person name="Elias J.E."/>
            <person name="Goswami T."/>
            <person name="Rad R."/>
            <person name="Beausoleil S.A."/>
            <person name="Villen J."/>
            <person name="Haas W."/>
            <person name="Sowa M.E."/>
            <person name="Gygi S.P."/>
        </authorList>
    </citation>
    <scope>IDENTIFICATION BY MASS SPECTROMETRY [LARGE SCALE ANALYSIS]</scope>
    <source>
        <tissue>Testis</tissue>
    </source>
</reference>
<reference key="5">
    <citation type="journal article" date="2011" name="DNA Cell Biol.">
        <title>SPAG4L, a novel nuclear envelope protein involved in the meiotic stage of spermatogenesis.</title>
        <authorList>
            <person name="Jiang X.Z."/>
            <person name="Yang M.G."/>
            <person name="Huang L.H."/>
            <person name="Li C.Q."/>
            <person name="Xing X.W."/>
        </authorList>
    </citation>
    <scope>TISSUE SPECIFICITY</scope>
    <scope>SUBCELLULAR LOCATION</scope>
    <scope>DEVELOPMENTAL STAGE</scope>
    <scope>FUNCTION</scope>
</reference>
<reference key="6">
    <citation type="journal article" date="2015" name="PLoS ONE">
        <title>Dynamics of Sun5 localization during spermatogenesis in wild type and Dpy19l2 knock-out mice indicates that Sun5 is not involved in acrosome attachment to the nuclear envelope.</title>
        <authorList>
            <person name="Yassine S."/>
            <person name="Escoffier J."/>
            <person name="Abi Nahed R."/>
            <person name="Nahed R.A."/>
            <person name="Pierre V."/>
            <person name="Karaouzene T."/>
            <person name="Ray P.F."/>
            <person name="Arnoult C."/>
        </authorList>
    </citation>
    <scope>SUBCELLULAR LOCATION</scope>
    <scope>GLYCOSYLATION</scope>
    <scope>SUBUNIT</scope>
</reference>
<reference key="7">
    <citation type="journal article" date="2017" name="Elife">
        <title>Essential role for SUN5 in anchoring sperm head to the tail.</title>
        <authorList>
            <person name="Shang Y."/>
            <person name="Zhu F."/>
            <person name="Wang L."/>
            <person name="Ouyang Y.C."/>
            <person name="Dong M.Z."/>
            <person name="Liu C."/>
            <person name="Zhao H."/>
            <person name="Cui X."/>
            <person name="Ma D."/>
            <person name="Zhang Z."/>
            <person name="Yang X."/>
            <person name="Guo Y."/>
            <person name="Liu F."/>
            <person name="Yuan L."/>
            <person name="Gao F."/>
            <person name="Guo X."/>
            <person name="Sun Q.Y."/>
            <person name="Cao Y."/>
            <person name="Li W."/>
        </authorList>
    </citation>
    <scope>FUNCTION</scope>
    <scope>DISRUPTION PHENOTYPE</scope>
    <scope>SUBCELLULAR LOCATION</scope>
</reference>
<reference key="8">
    <citation type="journal article" date="2018" name="J. Biol. Chem.">
        <title>Mechanistic insights into acephalic spermatozoa syndrome-associated mutations in the human SUN5 gene.</title>
        <authorList>
            <person name="Shang Y."/>
            <person name="Yan J."/>
            <person name="Tang W."/>
            <person name="Liu C."/>
            <person name="Xiao S."/>
            <person name="Guo Y."/>
            <person name="Yuan L."/>
            <person name="Chen L."/>
            <person name="Jiang H."/>
            <person name="Guo X."/>
            <person name="Qiao J."/>
            <person name="Li W."/>
        </authorList>
    </citation>
    <scope>FUNCTION</scope>
    <scope>SUBCELLULAR LOCATION</scope>
    <scope>MUTAGENESIS OF GLY-112; MET-160; VAL-259; THR-273; ASN-346 AND ARG-354</scope>
    <scope>INTERACTION WITH DNAJB13</scope>
    <scope>DEVELOPMENTAL STAGE</scope>
</reference>